<reference key="1">
    <citation type="submission" date="2024-08" db="EMBL/GenBank/DDBJ databases">
        <authorList>
            <consortium name="Porcine genome sequencing project"/>
        </authorList>
    </citation>
    <scope>NUCLEOTIDE SEQUENCE [LARGE SCALE GENOMIC DNA]</scope>
    <scope>IDENTIFICATION</scope>
    <source>
        <strain>Duroc</strain>
    </source>
</reference>
<reference key="2">
    <citation type="journal article" date="1992" name="Biochem. J.">
        <title>Hyaluronan-binding region of aggrecan from pig laryngeal cartilage. Amino acid sequence, analysis of N-linked oligosaccharides and location of the keratan sulphate.</title>
        <authorList>
            <person name="Barry F.P."/>
            <person name="Gaw J.U."/>
            <person name="Young C.N."/>
            <person name="Neame P.J."/>
        </authorList>
    </citation>
    <scope>PROTEIN SEQUENCE OF 17-386</scope>
    <scope>GLYCOSYLATION AT ASN-126; ASN-239; ASN-333; THR-371 AND THR-376</scope>
    <source>
        <tissue>Cartilage</tissue>
    </source>
</reference>
<reference key="3">
    <citation type="journal article" date="1993" name="Biochem. J.">
        <authorList>
            <person name="Barry F.P."/>
            <person name="Gaw J.U."/>
            <person name="Young C.N."/>
            <person name="Neame P.J."/>
        </authorList>
    </citation>
    <scope>ERRATUM OF PUBMED:1417734</scope>
    <scope>SEQUENCE REVISION</scope>
</reference>
<reference key="4">
    <citation type="journal article" date="1998" name="Matrix Biol.">
        <title>Molecular cloning and sequence analysis of the aggrecan interglobular domain from porcine, equine, bovine and ovine cartilage: comparison of proteinase-susceptible regions and sites of keratan sulfate substitution.</title>
        <authorList>
            <person name="Flannery C.R."/>
            <person name="Little C.B."/>
            <person name="Caterson B."/>
        </authorList>
    </citation>
    <scope>NUCLEOTIDE SEQUENCE [MRNA] OF 340-469</scope>
    <source>
        <tissue>Chondrocyte</tissue>
    </source>
</reference>
<reference key="5">
    <citation type="journal article" date="1994" name="Matrix Biol.">
        <title>Length variation in the keratan sulfate domain of mammalian aggrecan.</title>
        <authorList>
            <person name="Barry F.P."/>
            <person name="Neame P.J."/>
            <person name="Sasse J."/>
            <person name="Pearson D."/>
        </authorList>
    </citation>
    <scope>NUCLEOTIDE SEQUENCE [MRNA] OF 767-850</scope>
    <source>
        <tissue>Cartilage</tissue>
    </source>
</reference>
<reference key="6">
    <citation type="journal article" date="1992" name="J. Biol. Chem.">
        <title>The interglobular domain of cartilage aggrecan is cleaved by PUMP, gelatinases, and cathepsin B.</title>
        <authorList>
            <person name="Fosang A.J."/>
            <person name="Neame P.J."/>
            <person name="Last K."/>
            <person name="Hardingham T.E."/>
            <person name="Murphy G."/>
            <person name="Hamilton J.A."/>
        </authorList>
    </citation>
    <scope>PARTIAL PROTEIN SEQUENCE</scope>
</reference>
<sequence length="2434" mass="252021">MTTLLLVFVTLRVIAAAISVEVSEPDNSLSVSIPQPSPLRVLLGGSLTIPCYFIDPMHPVTTAPSTAPLAPRIKWSRVSKEKEVVLLVATEGQVRVNSAYQDRVTLPNYPAIPSDATLEIQNLRSNDSGIYRCEVMHGIEDSEATLEVVVKGIVFHYRAISTRYTLDFDRAQRACLQNSAIIATPEQLQAAYEDGFHQCDAGWLADQTVRYPIHTPREGCYGDKDEFPGVRTYGIRDTNETYDVYCFAEEMEGEVFYATSPEKFTFQEAANECRRLGARLATTGQLYLAWQGGMDMCSAGWLADRSVRYPISKARPNCGGNLLGVRTVYLHANQTGYPDPSSRYDAICYTGEDFVDIPENFFGVGGEEDITIQTVTWPDVELPLPRNITEGEARGTVILTVKPVFEFSPTAPEPEEPFTFAPGTGATAFPEAENRTGEATRPWAFPEESTPGLGAPTAFTSEDLVVQVTMAPGATEFPGQPRLPGGVVFHYRPGSSRYSLTFEEAQQACLRTGAVIASPEQLQAAYEAGYEQCDAGWLQDQTVRYPIVSPRTPCVGDKDSTPGVRTYGVRPPSETYDVYCYVDRLEGEVFFATRLEQFTFREAQEFCESQNATLASTGQLYAAWSRGLDKCYAGWLADGSLRYPIVTPRPACGGDKPGVRTVYLYPNQTGLLDPLSRHHAFCFRGVSAVAPSPGEEEGGTPTSLPDLEERIATQVGPGVAAVPVGEETTEVAAFTTEPENRTEWEFVYTPVGTSPLPGIPPTWPPTSAATEEGTEGPSATEAPSTSEEPFPSEKPFPSEEPFPSEEPFPSEKPSASEEPFPSEQPSTLSAPVPSRTELPGSGEVSGAPEVSGDFTGSGEVSGHLDYSGQPSGEIASGLPSEDLDSSGLTSAVGSGLPVESGLASGDEDKITWSSTSKVDRLPSGGEGPEGSVSGVEDLSGLPSGEGPEISASGVEDLSRLPSGEGPEISASGVEDLSRLPSGEGPEISASGIEDISQLPSGEGPEISASGIEDLSRLPSGEGPEISASGVEDLSRLPSGEGPEISASGVEDISQLPSGEGPEISASGVEDLSRLPSGEGPEISASGVEDISQLPSGEGPEISASGVEDLSRLPSGEGPEISASGVEDLSRLPSGEGPEISASGVEDISQLPSGEGPEISASGVEDLSRLPSGEGPEISASGVEDISQLPSGEGPEISVSGVEDLSRLPSGEGPEISASGVEDLSRLPSGEGPEISASGVEDISQLPSGEGPEISASGVEDLSRLPSGEGPEISASGVEDLSRLPSGEGPDISASGVEDLSRLPSGEGPEISASGIEDLSRLPSGEGPEISASGVEDLSRLPSGEGPEISASGVEDISQLPSGEGPEISASGVEDLSRLPSGEGPEISASGVEDISQLPSGEGPEISASGVEDLSRLPSGEGPEISASGVEDISQLPSGEGPEISASGVEDLSRLPSGGEGHLETSASGVEDLSGIPSGGEDHLESSASGVGDLSGLPSGREGLEIYASGAEDLSGLTSGKEDLAGSASGDLDVGRMPSGTLESGQAPEVSGLPSGFSGEYSGVDLGSGPSSGLPDFSELPSGFPTVSLVDTTLVEMVTATTASELEGRGTIGVSGAGETFGLPFSELDISGGASGHPSGAELSGQASGSPDISGETSGLFDVSGQPSGFPDISGGTSGLFEVSGQPSGFSGATSGVTELSGLSSGQPDISGDASGVLSGVGQPFGLTDVSGETSGVPDLSGQPSGWPGFSGMPSGTPDLVSSATSGSGESSGITFVDTSLVEVTPTTRKEEEGLGSVELSGLPSGEADLSGASGVVDVSGLASGATDSSGFTSQPPEFSGLPSGVTEVSGESSGVEIGSSLPSGAYDGSGLPLSAPTVYLVDRTLVESVTQAPTAQEAGEGPPGTLELSGAHSGVPDMSGDHSGSVDLSGLQSGLAEPSGEPASTPYFSGDFSVTTDISGDSSAATSTSGEASGLPEVTLIASEFVEGVTEPTVSQELGQRPPVTHTPQLFESSGEASASGDVPRFPGSGVEAPPIPESSRESSAYPEAETGASAAPEASGGASGSPDLTEATSAFHEADLEGTSGLGVSVSTSAFQEGTREVSAAPEVSRESTTTYDVGPEASGLPLATPVSSGDRTEVSGDLSGHTSGLEVAISTAIPEYAWTQQTQRPAEAPLEIESSSPVHSGEEMPTAKPATSQTEASIPTPPGQTDESEATTADQKLCENGWTKFQGHCYRHFPDRATWVDAESQCRKQQSHLSSIVTPEEQEFVNNNAQDYQWIGLNDKTIEGDFRWSDGHSLQFENWRPNQPDNFFATGEDCVVMIWHEKGEWNDVPCNYQLPFTCKKGTVACGEPPVVEHARIFGQKKDRYEINSLVRYQCTEGFVQRHVPTIRCQPSGHWEEPRITCTDPATYKRRLQKRSSRSLRRSRPSTGP</sequence>
<proteinExistence type="evidence at protein level"/>
<gene>
    <name type="primary">ACAN</name>
    <name type="synonym">AGC1</name>
</gene>
<comment type="function">
    <text>This proteoglycan is a major component of extracellular matrix of cartilagenous tissues. A major function of this protein is to resist compression in cartilage. It binds avidly to hyaluronic acid via an N-terminal globular region. May play a regulatory role in the matrix assembly of the cartilage.</text>
</comment>
<comment type="subunit">
    <text evidence="4 5 6">Forms a complex (via covalent bonds) with MATN1; the interaction increases with age of the organism via an increase in occupancy of MATN1 binding sites (By similarity). Interacts with FBLN1 (By similarity). Interacts with COMP (By similarity).</text>
</comment>
<comment type="subcellular location">
    <subcellularLocation>
        <location evidence="3">Secreted</location>
        <location evidence="3">Extracellular space</location>
        <location evidence="3">Extracellular matrix</location>
    </subcellularLocation>
</comment>
<comment type="domain">
    <text>Two globular domains, G1 and G2, comprise the N-terminus of the proteoglycan, while another globular region, G3, makes up the C-terminus. G1 contains Link domains and thus consists of three disulfide-bonded loop structures designated as the A, B, B' motifs. G2 is similar to G1. The keratan sulfate (KS) and the chondroitin sulfate (CS) attachment domains lie between G2 and G3.</text>
</comment>
<comment type="PTM">
    <text evidence="1">Contains mostly chondroitin sulfate, but also keratan sulfate chains, N-linked and O-linked oligosaccharides.</text>
</comment>
<comment type="similarity">
    <text evidence="14">Belongs to the aggrecan/versican proteoglycan family.</text>
</comment>
<evidence type="ECO:0000250" key="1"/>
<evidence type="ECO:0000250" key="2">
    <source>
        <dbReference type="UniProtKB" id="P07897"/>
    </source>
</evidence>
<evidence type="ECO:0000250" key="3">
    <source>
        <dbReference type="UniProtKB" id="P07898"/>
    </source>
</evidence>
<evidence type="ECO:0000250" key="4">
    <source>
        <dbReference type="UniProtKB" id="P13608"/>
    </source>
</evidence>
<evidence type="ECO:0000250" key="5">
    <source>
        <dbReference type="UniProtKB" id="P16112"/>
    </source>
</evidence>
<evidence type="ECO:0000250" key="6">
    <source>
        <dbReference type="UniProtKB" id="Q61282"/>
    </source>
</evidence>
<evidence type="ECO:0000255" key="7"/>
<evidence type="ECO:0000255" key="8">
    <source>
        <dbReference type="PROSITE-ProRule" id="PRU00040"/>
    </source>
</evidence>
<evidence type="ECO:0000255" key="9">
    <source>
        <dbReference type="PROSITE-ProRule" id="PRU00114"/>
    </source>
</evidence>
<evidence type="ECO:0000255" key="10">
    <source>
        <dbReference type="PROSITE-ProRule" id="PRU00302"/>
    </source>
</evidence>
<evidence type="ECO:0000255" key="11">
    <source>
        <dbReference type="PROSITE-ProRule" id="PRU00323"/>
    </source>
</evidence>
<evidence type="ECO:0000256" key="12">
    <source>
        <dbReference type="SAM" id="MobiDB-lite"/>
    </source>
</evidence>
<evidence type="ECO:0000269" key="13">
    <source>
    </source>
</evidence>
<evidence type="ECO:0000305" key="14"/>
<organism>
    <name type="scientific">Sus scrofa</name>
    <name type="common">Pig</name>
    <dbReference type="NCBI Taxonomy" id="9823"/>
    <lineage>
        <taxon>Eukaryota</taxon>
        <taxon>Metazoa</taxon>
        <taxon>Chordata</taxon>
        <taxon>Craniata</taxon>
        <taxon>Vertebrata</taxon>
        <taxon>Euteleostomi</taxon>
        <taxon>Mammalia</taxon>
        <taxon>Eutheria</taxon>
        <taxon>Laurasiatheria</taxon>
        <taxon>Artiodactyla</taxon>
        <taxon>Suina</taxon>
        <taxon>Suidae</taxon>
        <taxon>Sus</taxon>
    </lineage>
</organism>
<dbReference type="EMBL" id="AF019757">
    <property type="protein sequence ID" value="AAC48799.1"/>
    <property type="molecule type" value="mRNA"/>
</dbReference>
<dbReference type="EMBL" id="S74664">
    <property type="protein sequence ID" value="AAC60528.2"/>
    <property type="molecule type" value="mRNA"/>
</dbReference>
<dbReference type="PIR" id="S29139">
    <property type="entry name" value="S29139"/>
</dbReference>
<dbReference type="PIR" id="S78009">
    <property type="entry name" value="S78009"/>
</dbReference>
<dbReference type="RefSeq" id="XP_013852359.1">
    <property type="nucleotide sequence ID" value="XM_013996905.1"/>
</dbReference>
<dbReference type="RefSeq" id="XP_020953958.1">
    <property type="nucleotide sequence ID" value="XM_021098299.1"/>
</dbReference>
<dbReference type="SMR" id="Q29011"/>
<dbReference type="STRING" id="9823.ENSSSCP00000052661"/>
<dbReference type="GlyCosmos" id="Q29011">
    <property type="glycosylation" value="7 sites, No reported glycans"/>
</dbReference>
<dbReference type="GlyGen" id="Q29011">
    <property type="glycosylation" value="8 sites"/>
</dbReference>
<dbReference type="iPTMnet" id="Q29011"/>
<dbReference type="PaxDb" id="9823-ENSSSCP00000002003"/>
<dbReference type="PeptideAtlas" id="Q29011"/>
<dbReference type="Ensembl" id="ENSSSCT00000064359.3">
    <property type="protein sequence ID" value="ENSSSCP00000052661.1"/>
    <property type="gene ID" value="ENSSSCG00000001832.5"/>
</dbReference>
<dbReference type="GeneID" id="397255"/>
<dbReference type="VGNC" id="VGNC:109451">
    <property type="gene designation" value="ACAN"/>
</dbReference>
<dbReference type="eggNOG" id="ENOG502QUX8">
    <property type="taxonomic scope" value="Eukaryota"/>
</dbReference>
<dbReference type="GeneTree" id="ENSGT00940000155971"/>
<dbReference type="InParanoid" id="Q29011"/>
<dbReference type="Reactome" id="R-SSC-1474228">
    <property type="pathway name" value="Degradation of the extracellular matrix"/>
</dbReference>
<dbReference type="Reactome" id="R-SSC-2022854">
    <property type="pathway name" value="Keratan sulfate biosynthesis"/>
</dbReference>
<dbReference type="Reactome" id="R-SSC-2022857">
    <property type="pathway name" value="Keratan sulfate degradation"/>
</dbReference>
<dbReference type="Reactome" id="R-SSC-3000178">
    <property type="pathway name" value="ECM proteoglycans"/>
</dbReference>
<dbReference type="Proteomes" id="UP000008227">
    <property type="component" value="Chromosome 7"/>
</dbReference>
<dbReference type="Proteomes" id="UP000314985">
    <property type="component" value="Unplaced"/>
</dbReference>
<dbReference type="Proteomes" id="UP000694570">
    <property type="component" value="Unplaced"/>
</dbReference>
<dbReference type="Proteomes" id="UP000694571">
    <property type="component" value="Unplaced"/>
</dbReference>
<dbReference type="Proteomes" id="UP000694720">
    <property type="component" value="Unplaced"/>
</dbReference>
<dbReference type="Proteomes" id="UP000694722">
    <property type="component" value="Unplaced"/>
</dbReference>
<dbReference type="Proteomes" id="UP000694723">
    <property type="component" value="Unplaced"/>
</dbReference>
<dbReference type="Proteomes" id="UP000694724">
    <property type="component" value="Unplaced"/>
</dbReference>
<dbReference type="Proteomes" id="UP000694725">
    <property type="component" value="Unplaced"/>
</dbReference>
<dbReference type="Proteomes" id="UP000694726">
    <property type="component" value="Unplaced"/>
</dbReference>
<dbReference type="Proteomes" id="UP000694727">
    <property type="component" value="Unplaced"/>
</dbReference>
<dbReference type="Proteomes" id="UP000694728">
    <property type="component" value="Unplaced"/>
</dbReference>
<dbReference type="Bgee" id="ENSSSCG00000001832">
    <property type="expression patterns" value="Expressed in penis and 15 other cell types or tissues"/>
</dbReference>
<dbReference type="GO" id="GO:0005576">
    <property type="term" value="C:extracellular region"/>
    <property type="evidence" value="ECO:0000304"/>
    <property type="project" value="Reactome"/>
</dbReference>
<dbReference type="GO" id="GO:0005615">
    <property type="term" value="C:extracellular space"/>
    <property type="evidence" value="ECO:0000318"/>
    <property type="project" value="GO_Central"/>
</dbReference>
<dbReference type="GO" id="GO:0072534">
    <property type="term" value="C:perineuronal net"/>
    <property type="evidence" value="ECO:0000318"/>
    <property type="project" value="GO_Central"/>
</dbReference>
<dbReference type="GO" id="GO:0045202">
    <property type="term" value="C:synapse"/>
    <property type="evidence" value="ECO:0000318"/>
    <property type="project" value="GO_Central"/>
</dbReference>
<dbReference type="GO" id="GO:0030246">
    <property type="term" value="F:carbohydrate binding"/>
    <property type="evidence" value="ECO:0007669"/>
    <property type="project" value="UniProtKB-KW"/>
</dbReference>
<dbReference type="GO" id="GO:0005540">
    <property type="term" value="F:hyaluronic acid binding"/>
    <property type="evidence" value="ECO:0007669"/>
    <property type="project" value="InterPro"/>
</dbReference>
<dbReference type="GO" id="GO:0046872">
    <property type="term" value="F:metal ion binding"/>
    <property type="evidence" value="ECO:0007669"/>
    <property type="project" value="UniProtKB-KW"/>
</dbReference>
<dbReference type="GO" id="GO:0007155">
    <property type="term" value="P:cell adhesion"/>
    <property type="evidence" value="ECO:0007669"/>
    <property type="project" value="InterPro"/>
</dbReference>
<dbReference type="GO" id="GO:0007417">
    <property type="term" value="P:central nervous system development"/>
    <property type="evidence" value="ECO:0000318"/>
    <property type="project" value="GO_Central"/>
</dbReference>
<dbReference type="GO" id="GO:0001501">
    <property type="term" value="P:skeletal system development"/>
    <property type="evidence" value="ECO:0000318"/>
    <property type="project" value="GO_Central"/>
</dbReference>
<dbReference type="CDD" id="cd00033">
    <property type="entry name" value="CCP"/>
    <property type="match status" value="1"/>
</dbReference>
<dbReference type="CDD" id="cd03588">
    <property type="entry name" value="CLECT_CSPGs"/>
    <property type="match status" value="1"/>
</dbReference>
<dbReference type="CDD" id="cd05900">
    <property type="entry name" value="Ig_Aggrecan"/>
    <property type="match status" value="1"/>
</dbReference>
<dbReference type="CDD" id="cd03517">
    <property type="entry name" value="Link_domain_CSPGs_modules_1_3"/>
    <property type="match status" value="2"/>
</dbReference>
<dbReference type="CDD" id="cd03520">
    <property type="entry name" value="Link_domain_CSPGs_modules_2_4"/>
    <property type="match status" value="2"/>
</dbReference>
<dbReference type="FunFam" id="3.10.100.10:FF:000009">
    <property type="entry name" value="Aggrecan core protein"/>
    <property type="match status" value="1"/>
</dbReference>
<dbReference type="FunFam" id="3.10.100.10:FF:000011">
    <property type="entry name" value="Aggrecan core protein"/>
    <property type="match status" value="1"/>
</dbReference>
<dbReference type="FunFam" id="2.60.40.10:FF:000451">
    <property type="entry name" value="aggrecan core protein"/>
    <property type="match status" value="1"/>
</dbReference>
<dbReference type="FunFam" id="3.10.100.10:FF:000002">
    <property type="entry name" value="Hyaluronan proteoglycan link protein 1"/>
    <property type="match status" value="2"/>
</dbReference>
<dbReference type="FunFam" id="2.10.70.10:FF:000003">
    <property type="entry name" value="Versican core protein"/>
    <property type="match status" value="1"/>
</dbReference>
<dbReference type="FunFam" id="3.10.100.10:FF:000003">
    <property type="entry name" value="Versican core protein"/>
    <property type="match status" value="1"/>
</dbReference>
<dbReference type="Gene3D" id="2.10.70.10">
    <property type="entry name" value="Complement Module, domain 1"/>
    <property type="match status" value="1"/>
</dbReference>
<dbReference type="Gene3D" id="2.60.40.10">
    <property type="entry name" value="Immunoglobulins"/>
    <property type="match status" value="1"/>
</dbReference>
<dbReference type="Gene3D" id="3.10.100.10">
    <property type="entry name" value="Mannose-Binding Protein A, subunit A"/>
    <property type="match status" value="5"/>
</dbReference>
<dbReference type="InterPro" id="IPR001304">
    <property type="entry name" value="C-type_lectin-like"/>
</dbReference>
<dbReference type="InterPro" id="IPR016186">
    <property type="entry name" value="C-type_lectin-like/link_sf"/>
</dbReference>
<dbReference type="InterPro" id="IPR018378">
    <property type="entry name" value="C-type_lectin_CS"/>
</dbReference>
<dbReference type="InterPro" id="IPR033987">
    <property type="entry name" value="CSPG_CTLD"/>
</dbReference>
<dbReference type="InterPro" id="IPR016187">
    <property type="entry name" value="CTDL_fold"/>
</dbReference>
<dbReference type="InterPro" id="IPR050691">
    <property type="entry name" value="Hyaluronan_bind_Proteoglycan"/>
</dbReference>
<dbReference type="InterPro" id="IPR007110">
    <property type="entry name" value="Ig-like_dom"/>
</dbReference>
<dbReference type="InterPro" id="IPR036179">
    <property type="entry name" value="Ig-like_dom_sf"/>
</dbReference>
<dbReference type="InterPro" id="IPR013783">
    <property type="entry name" value="Ig-like_fold"/>
</dbReference>
<dbReference type="InterPro" id="IPR003006">
    <property type="entry name" value="Ig/MHC_CS"/>
</dbReference>
<dbReference type="InterPro" id="IPR003599">
    <property type="entry name" value="Ig_sub"/>
</dbReference>
<dbReference type="InterPro" id="IPR013106">
    <property type="entry name" value="Ig_V-set"/>
</dbReference>
<dbReference type="InterPro" id="IPR000538">
    <property type="entry name" value="Link_dom"/>
</dbReference>
<dbReference type="InterPro" id="IPR035976">
    <property type="entry name" value="Sushi/SCR/CCP_sf"/>
</dbReference>
<dbReference type="InterPro" id="IPR000436">
    <property type="entry name" value="Sushi_SCR_CCP_dom"/>
</dbReference>
<dbReference type="PANTHER" id="PTHR22804:SF42">
    <property type="entry name" value="AGGRECAN CORE PROTEIN"/>
    <property type="match status" value="1"/>
</dbReference>
<dbReference type="PANTHER" id="PTHR22804">
    <property type="entry name" value="AGGRECAN/VERSICAN PROTEOGLYCAN"/>
    <property type="match status" value="1"/>
</dbReference>
<dbReference type="Pfam" id="PF00059">
    <property type="entry name" value="Lectin_C"/>
    <property type="match status" value="1"/>
</dbReference>
<dbReference type="Pfam" id="PF00084">
    <property type="entry name" value="Sushi"/>
    <property type="match status" value="1"/>
</dbReference>
<dbReference type="Pfam" id="PF07686">
    <property type="entry name" value="V-set"/>
    <property type="match status" value="1"/>
</dbReference>
<dbReference type="Pfam" id="PF00193">
    <property type="entry name" value="Xlink"/>
    <property type="match status" value="4"/>
</dbReference>
<dbReference type="PRINTS" id="PR01265">
    <property type="entry name" value="LINKMODULE"/>
</dbReference>
<dbReference type="SMART" id="SM00032">
    <property type="entry name" value="CCP"/>
    <property type="match status" value="1"/>
</dbReference>
<dbReference type="SMART" id="SM00034">
    <property type="entry name" value="CLECT"/>
    <property type="match status" value="1"/>
</dbReference>
<dbReference type="SMART" id="SM00409">
    <property type="entry name" value="IG"/>
    <property type="match status" value="1"/>
</dbReference>
<dbReference type="SMART" id="SM00406">
    <property type="entry name" value="IGv"/>
    <property type="match status" value="1"/>
</dbReference>
<dbReference type="SMART" id="SM00445">
    <property type="entry name" value="LINK"/>
    <property type="match status" value="4"/>
</dbReference>
<dbReference type="SUPFAM" id="SSF56436">
    <property type="entry name" value="C-type lectin-like"/>
    <property type="match status" value="5"/>
</dbReference>
<dbReference type="SUPFAM" id="SSF57535">
    <property type="entry name" value="Complement control module/SCR domain"/>
    <property type="match status" value="1"/>
</dbReference>
<dbReference type="SUPFAM" id="SSF48726">
    <property type="entry name" value="Immunoglobulin"/>
    <property type="match status" value="1"/>
</dbReference>
<dbReference type="PROSITE" id="PS00615">
    <property type="entry name" value="C_TYPE_LECTIN_1"/>
    <property type="match status" value="1"/>
</dbReference>
<dbReference type="PROSITE" id="PS50041">
    <property type="entry name" value="C_TYPE_LECTIN_2"/>
    <property type="match status" value="1"/>
</dbReference>
<dbReference type="PROSITE" id="PS50835">
    <property type="entry name" value="IG_LIKE"/>
    <property type="match status" value="1"/>
</dbReference>
<dbReference type="PROSITE" id="PS00290">
    <property type="entry name" value="IG_MHC"/>
    <property type="match status" value="1"/>
</dbReference>
<dbReference type="PROSITE" id="PS01241">
    <property type="entry name" value="LINK_1"/>
    <property type="match status" value="4"/>
</dbReference>
<dbReference type="PROSITE" id="PS50963">
    <property type="entry name" value="LINK_2"/>
    <property type="match status" value="4"/>
</dbReference>
<dbReference type="PROSITE" id="PS50923">
    <property type="entry name" value="SUSHI"/>
    <property type="match status" value="1"/>
</dbReference>
<name>PGCA_PIG</name>
<accession>Q29011</accession>
<accession>A0A287B863</accession>
<accession>O18833</accession>
<accession>Q7M2W7</accession>
<protein>
    <recommendedName>
        <fullName>Aggrecan core protein</fullName>
    </recommendedName>
    <alternativeName>
        <fullName>Cartilage-specific proteoglycan core protein</fullName>
        <shortName>CSPCP</shortName>
    </alternativeName>
    <component>
        <recommendedName>
            <fullName>Aggrecan core protein 2</fullName>
        </recommendedName>
    </component>
</protein>
<feature type="signal peptide" evidence="13">
    <location>
        <begin position="1"/>
        <end position="16"/>
    </location>
</feature>
<feature type="chain" id="PRO_0000046691" description="Aggrecan core protein">
    <location>
        <begin position="17"/>
        <end position="2434"/>
    </location>
</feature>
<feature type="chain" id="PRO_0000262868" description="Aggrecan core protein 2">
    <location>
        <begin position="393"/>
        <end position="2434"/>
    </location>
</feature>
<feature type="domain" description="Ig-like V-type" evidence="9">
    <location>
        <begin position="25"/>
        <end position="147"/>
    </location>
</feature>
<feature type="domain" description="Link 1" evidence="11">
    <location>
        <begin position="153"/>
        <end position="248"/>
    </location>
</feature>
<feature type="domain" description="Link 2" evidence="11">
    <location>
        <begin position="254"/>
        <end position="350"/>
    </location>
</feature>
<feature type="domain" description="Link 3" evidence="11">
    <location>
        <begin position="487"/>
        <end position="582"/>
    </location>
</feature>
<feature type="domain" description="Link 4" evidence="11">
    <location>
        <begin position="588"/>
        <end position="684"/>
    </location>
</feature>
<feature type="domain" description="C-type lectin" evidence="8">
    <location>
        <begin position="2231"/>
        <end position="2345"/>
    </location>
</feature>
<feature type="domain" description="Sushi" evidence="10">
    <location>
        <begin position="2349"/>
        <end position="2409"/>
    </location>
</feature>
<feature type="region of interest" description="G1-A" evidence="5">
    <location>
        <begin position="48"/>
        <end position="141"/>
    </location>
</feature>
<feature type="region of interest" description="G1-A">
    <location>
        <begin position="48"/>
        <end position="140"/>
    </location>
</feature>
<feature type="region of interest" description="G1-B">
    <location>
        <begin position="152"/>
        <end position="247"/>
    </location>
</feature>
<feature type="region of interest" description="G1-B'">
    <location>
        <begin position="253"/>
        <end position="349"/>
    </location>
</feature>
<feature type="region of interest" description="G2-B" evidence="5">
    <location>
        <begin position="486"/>
        <end position="580"/>
    </location>
</feature>
<feature type="region of interest" description="G2-B'" evidence="5">
    <location>
        <begin position="587"/>
        <end position="682"/>
    </location>
</feature>
<feature type="region of interest" description="KS" evidence="5">
    <location>
        <begin position="686"/>
        <end position="833"/>
    </location>
</feature>
<feature type="region of interest" description="Disordered" evidence="12">
    <location>
        <begin position="750"/>
        <end position="1500"/>
    </location>
</feature>
<feature type="region of interest" description="CS-1" evidence="5">
    <location>
        <begin position="836"/>
        <end position="1539"/>
    </location>
</feature>
<feature type="region of interest" description="Disordered" evidence="12">
    <location>
        <begin position="1513"/>
        <end position="1576"/>
    </location>
</feature>
<feature type="region of interest" description="Disordered" evidence="12">
    <location>
        <begin position="1627"/>
        <end position="1771"/>
    </location>
</feature>
<feature type="region of interest" description="Disordered" evidence="12">
    <location>
        <begin position="1785"/>
        <end position="1810"/>
    </location>
</feature>
<feature type="region of interest" description="Disordered" evidence="12">
    <location>
        <begin position="1824"/>
        <end position="1861"/>
    </location>
</feature>
<feature type="region of interest" description="Disordered" evidence="12">
    <location>
        <begin position="1892"/>
        <end position="1952"/>
    </location>
</feature>
<feature type="region of interest" description="Disordered" evidence="12">
    <location>
        <begin position="1991"/>
        <end position="2147"/>
    </location>
</feature>
<feature type="region of interest" description="Disordered" evidence="12">
    <location>
        <begin position="2167"/>
        <end position="2219"/>
    </location>
</feature>
<feature type="compositionally biased region" description="Low complexity" evidence="12">
    <location>
        <begin position="780"/>
        <end position="791"/>
    </location>
</feature>
<feature type="compositionally biased region" description="Pro residues" evidence="12">
    <location>
        <begin position="792"/>
        <end position="806"/>
    </location>
</feature>
<feature type="compositionally biased region" description="Low complexity" evidence="12">
    <location>
        <begin position="807"/>
        <end position="823"/>
    </location>
</feature>
<feature type="compositionally biased region" description="Polar residues" evidence="12">
    <location>
        <begin position="1644"/>
        <end position="1656"/>
    </location>
</feature>
<feature type="compositionally biased region" description="Polar residues" evidence="12">
    <location>
        <begin position="1684"/>
        <end position="1707"/>
    </location>
</feature>
<feature type="compositionally biased region" description="Low complexity" evidence="12">
    <location>
        <begin position="1761"/>
        <end position="1771"/>
    </location>
</feature>
<feature type="compositionally biased region" description="Low complexity" evidence="12">
    <location>
        <begin position="1794"/>
        <end position="1806"/>
    </location>
</feature>
<feature type="compositionally biased region" description="Polar residues" evidence="12">
    <location>
        <begin position="1825"/>
        <end position="1836"/>
    </location>
</feature>
<feature type="compositionally biased region" description="Low complexity" evidence="12">
    <location>
        <begin position="1843"/>
        <end position="1860"/>
    </location>
</feature>
<feature type="compositionally biased region" description="Polar residues" evidence="12">
    <location>
        <begin position="2006"/>
        <end position="2017"/>
    </location>
</feature>
<feature type="compositionally biased region" description="Low complexity" evidence="12">
    <location>
        <begin position="2047"/>
        <end position="2067"/>
    </location>
</feature>
<feature type="compositionally biased region" description="Low complexity" evidence="12">
    <location>
        <begin position="2083"/>
        <end position="2094"/>
    </location>
</feature>
<feature type="binding site" evidence="2">
    <location>
        <position position="2285"/>
    </location>
    <ligand>
        <name>Ca(2+)</name>
        <dbReference type="ChEBI" id="CHEBI:29108"/>
        <label>1</label>
    </ligand>
</feature>
<feature type="binding site" evidence="2">
    <location>
        <position position="2289"/>
    </location>
    <ligand>
        <name>Ca(2+)</name>
        <dbReference type="ChEBI" id="CHEBI:29108"/>
        <label>1</label>
    </ligand>
</feature>
<feature type="binding site" evidence="2">
    <location>
        <position position="2309"/>
    </location>
    <ligand>
        <name>Ca(2+)</name>
        <dbReference type="ChEBI" id="CHEBI:29108"/>
        <label>2</label>
    </ligand>
</feature>
<feature type="binding site" evidence="2">
    <location>
        <position position="2311"/>
    </location>
    <ligand>
        <name>Ca(2+)</name>
        <dbReference type="ChEBI" id="CHEBI:29108"/>
        <label>2</label>
    </ligand>
</feature>
<feature type="binding site" evidence="2">
    <location>
        <position position="2312"/>
    </location>
    <ligand>
        <name>Ca(2+)</name>
        <dbReference type="ChEBI" id="CHEBI:29108"/>
        <label>1</label>
    </ligand>
</feature>
<feature type="binding site" evidence="2">
    <location>
        <position position="2318"/>
    </location>
    <ligand>
        <name>Ca(2+)</name>
        <dbReference type="ChEBI" id="CHEBI:29108"/>
        <label>1</label>
    </ligand>
</feature>
<feature type="binding site" evidence="2">
    <location>
        <position position="2318"/>
    </location>
    <ligand>
        <name>Ca(2+)</name>
        <dbReference type="ChEBI" id="CHEBI:29108"/>
        <label>2</label>
    </ligand>
</feature>
<feature type="binding site" evidence="2">
    <location>
        <position position="2319"/>
    </location>
    <ligand>
        <name>Ca(2+)</name>
        <dbReference type="ChEBI" id="CHEBI:29108"/>
        <label>1</label>
    </ligand>
</feature>
<feature type="binding site" evidence="2">
    <location>
        <position position="2332"/>
    </location>
    <ligand>
        <name>Ca(2+)</name>
        <dbReference type="ChEBI" id="CHEBI:29108"/>
        <label>2</label>
    </ligand>
</feature>
<feature type="binding site" evidence="2">
    <location>
        <position position="2333"/>
    </location>
    <ligand>
        <name>Ca(2+)</name>
        <dbReference type="ChEBI" id="CHEBI:29108"/>
        <label>2</label>
    </ligand>
</feature>
<feature type="site" description="Cleavage; by aggrecanase" evidence="5">
    <location>
        <begin position="392"/>
        <end position="393"/>
    </location>
</feature>
<feature type="glycosylation site" description="N-linked (GlcNAc...) asparagine" evidence="13">
    <location>
        <position position="126"/>
    </location>
</feature>
<feature type="glycosylation site" description="N-linked (GlcNAc...) asparagine" evidence="13">
    <location>
        <position position="239"/>
    </location>
</feature>
<feature type="glycosylation site" description="N-linked (GlcNAc...) asparagine" evidence="13">
    <location>
        <position position="333"/>
    </location>
</feature>
<feature type="glycosylation site" description="O-linked (Xyl...) (keratan sulfate) threonine" evidence="13">
    <location>
        <position position="371"/>
    </location>
</feature>
<feature type="glycosylation site" description="O-linked (Xyl...) (keratan sulfate) threonine" evidence="13">
    <location>
        <position position="376"/>
    </location>
</feature>
<feature type="glycosylation site" description="N-linked (GlcNAc...) asparagine" evidence="7">
    <location>
        <position position="387"/>
    </location>
</feature>
<feature type="glycosylation site" description="N-linked (GlcNAc...) asparagine" evidence="7">
    <location>
        <position position="434"/>
    </location>
</feature>
<feature type="glycosylation site" description="N-linked (GlcNAc...) asparagine" evidence="7">
    <location>
        <position position="611"/>
    </location>
</feature>
<feature type="glycosylation site" description="N-linked (GlcNAc...) asparagine" evidence="7">
    <location>
        <position position="667"/>
    </location>
</feature>
<feature type="glycosylation site" description="N-linked (GlcNAc...) asparagine" evidence="7">
    <location>
        <position position="740"/>
    </location>
</feature>
<feature type="disulfide bond" evidence="9">
    <location>
        <begin position="51"/>
        <end position="133"/>
    </location>
</feature>
<feature type="disulfide bond" evidence="11">
    <location>
        <begin position="175"/>
        <end position="246"/>
    </location>
</feature>
<feature type="disulfide bond" evidence="11">
    <location>
        <begin position="199"/>
        <end position="220"/>
    </location>
</feature>
<feature type="disulfide bond" evidence="11">
    <location>
        <begin position="273"/>
        <end position="348"/>
    </location>
</feature>
<feature type="disulfide bond" evidence="11">
    <location>
        <begin position="297"/>
        <end position="318"/>
    </location>
</feature>
<feature type="disulfide bond" evidence="11">
    <location>
        <begin position="509"/>
        <end position="580"/>
    </location>
</feature>
<feature type="disulfide bond" evidence="11">
    <location>
        <begin position="533"/>
        <end position="554"/>
    </location>
</feature>
<feature type="disulfide bond" evidence="11">
    <location>
        <begin position="607"/>
        <end position="682"/>
    </location>
</feature>
<feature type="disulfide bond" evidence="11">
    <location>
        <begin position="631"/>
        <end position="652"/>
    </location>
</feature>
<feature type="disulfide bond" evidence="8">
    <location>
        <begin position="2252"/>
        <end position="2344"/>
    </location>
</feature>
<feature type="disulfide bond" evidence="8">
    <location>
        <begin position="2320"/>
        <end position="2336"/>
    </location>
</feature>
<feature type="disulfide bond" evidence="10">
    <location>
        <begin position="2351"/>
        <end position="2394"/>
    </location>
</feature>
<feature type="disulfide bond" evidence="10">
    <location>
        <begin position="2380"/>
        <end position="2407"/>
    </location>
</feature>
<keyword id="KW-0106">Calcium</keyword>
<keyword id="KW-0903">Direct protein sequencing</keyword>
<keyword id="KW-1015">Disulfide bond</keyword>
<keyword id="KW-0272">Extracellular matrix</keyword>
<keyword id="KW-0325">Glycoprotein</keyword>
<keyword id="KW-0393">Immunoglobulin domain</keyword>
<keyword id="KW-0430">Lectin</keyword>
<keyword id="KW-0479">Metal-binding</keyword>
<keyword id="KW-0654">Proteoglycan</keyword>
<keyword id="KW-1185">Reference proteome</keyword>
<keyword id="KW-0677">Repeat</keyword>
<keyword id="KW-0964">Secreted</keyword>
<keyword id="KW-0732">Signal</keyword>
<keyword id="KW-0768">Sushi</keyword>